<gene>
    <name evidence="1" type="primary">xseB</name>
    <name type="ordered locus">LACR_0923</name>
</gene>
<organism>
    <name type="scientific">Lactococcus lactis subsp. cremoris (strain SK11)</name>
    <dbReference type="NCBI Taxonomy" id="272622"/>
    <lineage>
        <taxon>Bacteria</taxon>
        <taxon>Bacillati</taxon>
        <taxon>Bacillota</taxon>
        <taxon>Bacilli</taxon>
        <taxon>Lactobacillales</taxon>
        <taxon>Streptococcaceae</taxon>
        <taxon>Lactococcus</taxon>
        <taxon>Lactococcus cremoris subsp. cremoris</taxon>
    </lineage>
</organism>
<feature type="chain" id="PRO_0000303719" description="Exodeoxyribonuclease 7 small subunit">
    <location>
        <begin position="1"/>
        <end position="79"/>
    </location>
</feature>
<dbReference type="EC" id="3.1.11.6" evidence="1"/>
<dbReference type="EMBL" id="CP000425">
    <property type="protein sequence ID" value="ABJ72471.1"/>
    <property type="molecule type" value="Genomic_DNA"/>
</dbReference>
<dbReference type="RefSeq" id="WP_011675817.1">
    <property type="nucleotide sequence ID" value="NC_008527.1"/>
</dbReference>
<dbReference type="SMR" id="Q030A1"/>
<dbReference type="KEGG" id="llc:LACR_0923"/>
<dbReference type="HOGENOM" id="CLU_145918_3_2_9"/>
<dbReference type="Proteomes" id="UP000000240">
    <property type="component" value="Chromosome"/>
</dbReference>
<dbReference type="GO" id="GO:0005829">
    <property type="term" value="C:cytosol"/>
    <property type="evidence" value="ECO:0007669"/>
    <property type="project" value="TreeGrafter"/>
</dbReference>
<dbReference type="GO" id="GO:0009318">
    <property type="term" value="C:exodeoxyribonuclease VII complex"/>
    <property type="evidence" value="ECO:0007669"/>
    <property type="project" value="InterPro"/>
</dbReference>
<dbReference type="GO" id="GO:0008855">
    <property type="term" value="F:exodeoxyribonuclease VII activity"/>
    <property type="evidence" value="ECO:0007669"/>
    <property type="project" value="UniProtKB-UniRule"/>
</dbReference>
<dbReference type="GO" id="GO:0006308">
    <property type="term" value="P:DNA catabolic process"/>
    <property type="evidence" value="ECO:0007669"/>
    <property type="project" value="UniProtKB-UniRule"/>
</dbReference>
<dbReference type="Gene3D" id="1.10.287.1040">
    <property type="entry name" value="Exonuclease VII, small subunit"/>
    <property type="match status" value="1"/>
</dbReference>
<dbReference type="HAMAP" id="MF_00337">
    <property type="entry name" value="Exonuc_7_S"/>
    <property type="match status" value="1"/>
</dbReference>
<dbReference type="InterPro" id="IPR003761">
    <property type="entry name" value="Exonuc_VII_S"/>
</dbReference>
<dbReference type="InterPro" id="IPR037004">
    <property type="entry name" value="Exonuc_VII_ssu_sf"/>
</dbReference>
<dbReference type="NCBIfam" id="NF002138">
    <property type="entry name" value="PRK00977.1-2"/>
    <property type="match status" value="1"/>
</dbReference>
<dbReference type="NCBIfam" id="TIGR01280">
    <property type="entry name" value="xseB"/>
    <property type="match status" value="1"/>
</dbReference>
<dbReference type="PANTHER" id="PTHR34137">
    <property type="entry name" value="EXODEOXYRIBONUCLEASE 7 SMALL SUBUNIT"/>
    <property type="match status" value="1"/>
</dbReference>
<dbReference type="PANTHER" id="PTHR34137:SF1">
    <property type="entry name" value="EXODEOXYRIBONUCLEASE 7 SMALL SUBUNIT"/>
    <property type="match status" value="1"/>
</dbReference>
<dbReference type="Pfam" id="PF02609">
    <property type="entry name" value="Exonuc_VII_S"/>
    <property type="match status" value="1"/>
</dbReference>
<dbReference type="PIRSF" id="PIRSF006488">
    <property type="entry name" value="Exonuc_VII_S"/>
    <property type="match status" value="1"/>
</dbReference>
<dbReference type="SUPFAM" id="SSF116842">
    <property type="entry name" value="XseB-like"/>
    <property type="match status" value="1"/>
</dbReference>
<accession>Q030A1</accession>
<protein>
    <recommendedName>
        <fullName evidence="1">Exodeoxyribonuclease 7 small subunit</fullName>
        <ecNumber evidence="1">3.1.11.6</ecNumber>
    </recommendedName>
    <alternativeName>
        <fullName evidence="1">Exodeoxyribonuclease VII small subunit</fullName>
        <shortName evidence="1">Exonuclease VII small subunit</shortName>
    </alternativeName>
</protein>
<proteinExistence type="inferred from homology"/>
<reference key="1">
    <citation type="journal article" date="2006" name="Proc. Natl. Acad. Sci. U.S.A.">
        <title>Comparative genomics of the lactic acid bacteria.</title>
        <authorList>
            <person name="Makarova K.S."/>
            <person name="Slesarev A."/>
            <person name="Wolf Y.I."/>
            <person name="Sorokin A."/>
            <person name="Mirkin B."/>
            <person name="Koonin E.V."/>
            <person name="Pavlov A."/>
            <person name="Pavlova N."/>
            <person name="Karamychev V."/>
            <person name="Polouchine N."/>
            <person name="Shakhova V."/>
            <person name="Grigoriev I."/>
            <person name="Lou Y."/>
            <person name="Rohksar D."/>
            <person name="Lucas S."/>
            <person name="Huang K."/>
            <person name="Goodstein D.M."/>
            <person name="Hawkins T."/>
            <person name="Plengvidhya V."/>
            <person name="Welker D."/>
            <person name="Hughes J."/>
            <person name="Goh Y."/>
            <person name="Benson A."/>
            <person name="Baldwin K."/>
            <person name="Lee J.-H."/>
            <person name="Diaz-Muniz I."/>
            <person name="Dosti B."/>
            <person name="Smeianov V."/>
            <person name="Wechter W."/>
            <person name="Barabote R."/>
            <person name="Lorca G."/>
            <person name="Altermann E."/>
            <person name="Barrangou R."/>
            <person name="Ganesan B."/>
            <person name="Xie Y."/>
            <person name="Rawsthorne H."/>
            <person name="Tamir D."/>
            <person name="Parker C."/>
            <person name="Breidt F."/>
            <person name="Broadbent J.R."/>
            <person name="Hutkins R."/>
            <person name="O'Sullivan D."/>
            <person name="Steele J."/>
            <person name="Unlu G."/>
            <person name="Saier M.H. Jr."/>
            <person name="Klaenhammer T."/>
            <person name="Richardson P."/>
            <person name="Kozyavkin S."/>
            <person name="Weimer B.C."/>
            <person name="Mills D.A."/>
        </authorList>
    </citation>
    <scope>NUCLEOTIDE SEQUENCE [LARGE SCALE GENOMIC DNA]</scope>
    <source>
        <strain>SK11</strain>
    </source>
</reference>
<sequence>MATKKEEVKFEDNLAELENIVRKLESGDVALEDAIAEFQKGMKISETLKKTLNEAEQTLVQIVGKDDNESEFSAEQKEY</sequence>
<keyword id="KW-0963">Cytoplasm</keyword>
<keyword id="KW-0269">Exonuclease</keyword>
<keyword id="KW-0378">Hydrolase</keyword>
<keyword id="KW-0540">Nuclease</keyword>
<comment type="function">
    <text evidence="1">Bidirectionally degrades single-stranded DNA into large acid-insoluble oligonucleotides, which are then degraded further into small acid-soluble oligonucleotides.</text>
</comment>
<comment type="catalytic activity">
    <reaction evidence="1">
        <text>Exonucleolytic cleavage in either 5'- to 3'- or 3'- to 5'-direction to yield nucleoside 5'-phosphates.</text>
        <dbReference type="EC" id="3.1.11.6"/>
    </reaction>
</comment>
<comment type="subunit">
    <text evidence="1">Heterooligomer composed of large and small subunits.</text>
</comment>
<comment type="subcellular location">
    <subcellularLocation>
        <location evidence="1">Cytoplasm</location>
    </subcellularLocation>
</comment>
<comment type="similarity">
    <text evidence="1">Belongs to the XseB family.</text>
</comment>
<name>EX7S_LACLS</name>
<evidence type="ECO:0000255" key="1">
    <source>
        <dbReference type="HAMAP-Rule" id="MF_00337"/>
    </source>
</evidence>